<reference key="1">
    <citation type="submission" date="1998-12" db="EMBL/GenBank/DDBJ databases">
        <title>Functional prediction of the coding sequences of 121 new genes deduced by analysis of cDNA clones from human fetal liver.</title>
        <authorList>
            <person name="Zhang C."/>
            <person name="Yu Y."/>
            <person name="Zhang S."/>
            <person name="Wei H."/>
            <person name="Zhou G."/>
            <person name="Ouyang S."/>
            <person name="Luo L."/>
            <person name="Bi J."/>
            <person name="Liu M."/>
            <person name="He F."/>
        </authorList>
    </citation>
    <scope>NUCLEOTIDE SEQUENCE [LARGE SCALE MRNA]</scope>
    <source>
        <tissue>Fetal liver</tissue>
    </source>
</reference>
<organism>
    <name type="scientific">Homo sapiens</name>
    <name type="common">Human</name>
    <dbReference type="NCBI Taxonomy" id="9606"/>
    <lineage>
        <taxon>Eukaryota</taxon>
        <taxon>Metazoa</taxon>
        <taxon>Chordata</taxon>
        <taxon>Craniata</taxon>
        <taxon>Vertebrata</taxon>
        <taxon>Euteleostomi</taxon>
        <taxon>Mammalia</taxon>
        <taxon>Eutheria</taxon>
        <taxon>Euarchontoglires</taxon>
        <taxon>Primates</taxon>
        <taxon>Haplorrhini</taxon>
        <taxon>Catarrhini</taxon>
        <taxon>Hominidae</taxon>
        <taxon>Homo</taxon>
    </lineage>
</organism>
<proteinExistence type="uncertain"/>
<comment type="caution">
    <text evidence="2">Product of a dubious CDS prediction.</text>
</comment>
<protein>
    <recommendedName>
        <fullName>Putative uncharacterized protein PRO2289</fullName>
    </recommendedName>
</protein>
<gene>
    <name type="ORF">PRO2289</name>
</gene>
<accession>Q9P1D8</accession>
<feature type="chain" id="PRO_0000319037" description="Putative uncharacterized protein PRO2289">
    <location>
        <begin position="1"/>
        <end position="64"/>
    </location>
</feature>
<feature type="region of interest" description="Disordered" evidence="1">
    <location>
        <begin position="1"/>
        <end position="64"/>
    </location>
</feature>
<feature type="compositionally biased region" description="Gly residues" evidence="1">
    <location>
        <begin position="16"/>
        <end position="28"/>
    </location>
</feature>
<name>YP008_HUMAN</name>
<dbReference type="EMBL" id="AF116698">
    <property type="protein sequence ID" value="AAF71118.1"/>
    <property type="molecule type" value="mRNA"/>
</dbReference>
<dbReference type="GlyGen" id="Q9P1D8">
    <property type="glycosylation" value="2 sites, 1 O-linked glycan (2 sites)"/>
</dbReference>
<dbReference type="BioMuta" id="PRO2289"/>
<dbReference type="neXtProt" id="NX_Q9P1D8"/>
<dbReference type="InParanoid" id="Q9P1D8"/>
<dbReference type="PAN-GO" id="Q9P1D8">
    <property type="GO annotations" value="0 GO annotations based on evolutionary models"/>
</dbReference>
<dbReference type="Pharos" id="Q9P1D8">
    <property type="development level" value="Tdark"/>
</dbReference>
<dbReference type="Proteomes" id="UP000005640">
    <property type="component" value="Unplaced"/>
</dbReference>
<dbReference type="RNAct" id="Q9P1D8">
    <property type="molecule type" value="protein"/>
</dbReference>
<sequence>MMITRGWEGWGRRGARGAGTGTGLGGPGTPESSVTPPEFPLPPATRITPNFPNTLDPAISRSSS</sequence>
<evidence type="ECO:0000256" key="1">
    <source>
        <dbReference type="SAM" id="MobiDB-lite"/>
    </source>
</evidence>
<evidence type="ECO:0000305" key="2"/>
<keyword id="KW-1185">Reference proteome</keyword>